<dbReference type="EC" id="4.3.3.7" evidence="1"/>
<dbReference type="EMBL" id="CP000157">
    <property type="protein sequence ID" value="ABC63644.1"/>
    <property type="molecule type" value="Genomic_DNA"/>
</dbReference>
<dbReference type="RefSeq" id="WP_011414478.1">
    <property type="nucleotide sequence ID" value="NC_007722.1"/>
</dbReference>
<dbReference type="SMR" id="Q2N9J7"/>
<dbReference type="STRING" id="314225.ELI_07760"/>
<dbReference type="KEGG" id="eli:ELI_07760"/>
<dbReference type="eggNOG" id="COG0329">
    <property type="taxonomic scope" value="Bacteria"/>
</dbReference>
<dbReference type="HOGENOM" id="CLU_049343_7_0_5"/>
<dbReference type="OrthoDB" id="9782828at2"/>
<dbReference type="UniPathway" id="UPA00034">
    <property type="reaction ID" value="UER00017"/>
</dbReference>
<dbReference type="Proteomes" id="UP000008808">
    <property type="component" value="Chromosome"/>
</dbReference>
<dbReference type="GO" id="GO:0005829">
    <property type="term" value="C:cytosol"/>
    <property type="evidence" value="ECO:0007669"/>
    <property type="project" value="TreeGrafter"/>
</dbReference>
<dbReference type="GO" id="GO:0008840">
    <property type="term" value="F:4-hydroxy-tetrahydrodipicolinate synthase activity"/>
    <property type="evidence" value="ECO:0007669"/>
    <property type="project" value="UniProtKB-UniRule"/>
</dbReference>
<dbReference type="GO" id="GO:0019877">
    <property type="term" value="P:diaminopimelate biosynthetic process"/>
    <property type="evidence" value="ECO:0007669"/>
    <property type="project" value="UniProtKB-UniRule"/>
</dbReference>
<dbReference type="GO" id="GO:0009089">
    <property type="term" value="P:lysine biosynthetic process via diaminopimelate"/>
    <property type="evidence" value="ECO:0007669"/>
    <property type="project" value="UniProtKB-UniRule"/>
</dbReference>
<dbReference type="CDD" id="cd00950">
    <property type="entry name" value="DHDPS"/>
    <property type="match status" value="1"/>
</dbReference>
<dbReference type="Gene3D" id="3.20.20.70">
    <property type="entry name" value="Aldolase class I"/>
    <property type="match status" value="1"/>
</dbReference>
<dbReference type="HAMAP" id="MF_00418">
    <property type="entry name" value="DapA"/>
    <property type="match status" value="1"/>
</dbReference>
<dbReference type="InterPro" id="IPR013785">
    <property type="entry name" value="Aldolase_TIM"/>
</dbReference>
<dbReference type="InterPro" id="IPR005263">
    <property type="entry name" value="DapA"/>
</dbReference>
<dbReference type="InterPro" id="IPR002220">
    <property type="entry name" value="DapA-like"/>
</dbReference>
<dbReference type="InterPro" id="IPR020624">
    <property type="entry name" value="Schiff_base-form_aldolases_CS"/>
</dbReference>
<dbReference type="NCBIfam" id="TIGR00674">
    <property type="entry name" value="dapA"/>
    <property type="match status" value="1"/>
</dbReference>
<dbReference type="PANTHER" id="PTHR12128:SF66">
    <property type="entry name" value="4-HYDROXY-2-OXOGLUTARATE ALDOLASE, MITOCHONDRIAL"/>
    <property type="match status" value="1"/>
</dbReference>
<dbReference type="PANTHER" id="PTHR12128">
    <property type="entry name" value="DIHYDRODIPICOLINATE SYNTHASE"/>
    <property type="match status" value="1"/>
</dbReference>
<dbReference type="Pfam" id="PF00701">
    <property type="entry name" value="DHDPS"/>
    <property type="match status" value="1"/>
</dbReference>
<dbReference type="PIRSF" id="PIRSF001365">
    <property type="entry name" value="DHDPS"/>
    <property type="match status" value="1"/>
</dbReference>
<dbReference type="PRINTS" id="PR00146">
    <property type="entry name" value="DHPICSNTHASE"/>
</dbReference>
<dbReference type="SMART" id="SM01130">
    <property type="entry name" value="DHDPS"/>
    <property type="match status" value="1"/>
</dbReference>
<dbReference type="SUPFAM" id="SSF51569">
    <property type="entry name" value="Aldolase"/>
    <property type="match status" value="1"/>
</dbReference>
<dbReference type="PROSITE" id="PS00665">
    <property type="entry name" value="DHDPS_1"/>
    <property type="match status" value="1"/>
</dbReference>
<gene>
    <name evidence="1" type="primary">dapA</name>
    <name type="ordered locus">ELI_07760</name>
</gene>
<sequence>MFSGSIPALATPFRDGAFDEATFRRLVDWQIESGSSALVPCGTTGEASTLSNAEHHRVIEVCIEQAAGRVPVIAGCGSNDTRNALLHMNFSKKAGAAAGLCVAPYYNRPSQAGLIAHFSFLAENSDLPIVLYNVPSRTVTDIEDETVVELVTKYPDRIVAIKDASGDLSRVADHRMGIGRDFCQLSGNDELWLPHSAAGGSGAISVTANVAPALCAEFHSAIAANELARARELNDRLFPLHYAMFSDASPAPVKYALSRVMEEFTDEVRLPIVSASEASRKAVDEALEHAGLI</sequence>
<protein>
    <recommendedName>
        <fullName evidence="1">4-hydroxy-tetrahydrodipicolinate synthase</fullName>
        <shortName evidence="1">HTPA synthase</shortName>
        <ecNumber evidence="1">4.3.3.7</ecNumber>
    </recommendedName>
</protein>
<reference key="1">
    <citation type="journal article" date="2009" name="J. Bacteriol.">
        <title>Complete genome sequence of Erythrobacter litoralis HTCC2594.</title>
        <authorList>
            <person name="Oh H.M."/>
            <person name="Giovannoni S.J."/>
            <person name="Ferriera S."/>
            <person name="Johnson J."/>
            <person name="Cho J.C."/>
        </authorList>
    </citation>
    <scope>NUCLEOTIDE SEQUENCE [LARGE SCALE GENOMIC DNA]</scope>
    <source>
        <strain>HTCC2594</strain>
    </source>
</reference>
<evidence type="ECO:0000255" key="1">
    <source>
        <dbReference type="HAMAP-Rule" id="MF_00418"/>
    </source>
</evidence>
<evidence type="ECO:0000305" key="2"/>
<keyword id="KW-0028">Amino-acid biosynthesis</keyword>
<keyword id="KW-0963">Cytoplasm</keyword>
<keyword id="KW-0220">Diaminopimelate biosynthesis</keyword>
<keyword id="KW-0456">Lyase</keyword>
<keyword id="KW-0457">Lysine biosynthesis</keyword>
<keyword id="KW-1185">Reference proteome</keyword>
<keyword id="KW-0704">Schiff base</keyword>
<organism>
    <name type="scientific">Erythrobacter litoralis (strain HTCC2594)</name>
    <dbReference type="NCBI Taxonomy" id="314225"/>
    <lineage>
        <taxon>Bacteria</taxon>
        <taxon>Pseudomonadati</taxon>
        <taxon>Pseudomonadota</taxon>
        <taxon>Alphaproteobacteria</taxon>
        <taxon>Sphingomonadales</taxon>
        <taxon>Erythrobacteraceae</taxon>
        <taxon>Erythrobacter/Porphyrobacter group</taxon>
        <taxon>Erythrobacter</taxon>
    </lineage>
</organism>
<feature type="chain" id="PRO_1000050189" description="4-hydroxy-tetrahydrodipicolinate synthase">
    <location>
        <begin position="1"/>
        <end position="293"/>
    </location>
</feature>
<feature type="active site" description="Proton donor/acceptor" evidence="1">
    <location>
        <position position="132"/>
    </location>
</feature>
<feature type="active site" description="Schiff-base intermediate with substrate" evidence="1">
    <location>
        <position position="162"/>
    </location>
</feature>
<feature type="binding site" evidence="1">
    <location>
        <position position="44"/>
    </location>
    <ligand>
        <name>pyruvate</name>
        <dbReference type="ChEBI" id="CHEBI:15361"/>
    </ligand>
</feature>
<feature type="binding site" evidence="1">
    <location>
        <position position="204"/>
    </location>
    <ligand>
        <name>pyruvate</name>
        <dbReference type="ChEBI" id="CHEBI:15361"/>
    </ligand>
</feature>
<feature type="site" description="Part of a proton relay during catalysis" evidence="1">
    <location>
        <position position="43"/>
    </location>
</feature>
<feature type="site" description="Part of a proton relay during catalysis" evidence="1">
    <location>
        <position position="106"/>
    </location>
</feature>
<name>DAPA_ERYLH</name>
<comment type="function">
    <text evidence="1">Catalyzes the condensation of (S)-aspartate-beta-semialdehyde [(S)-ASA] and pyruvate to 4-hydroxy-tetrahydrodipicolinate (HTPA).</text>
</comment>
<comment type="catalytic activity">
    <reaction evidence="1">
        <text>L-aspartate 4-semialdehyde + pyruvate = (2S,4S)-4-hydroxy-2,3,4,5-tetrahydrodipicolinate + H2O + H(+)</text>
        <dbReference type="Rhea" id="RHEA:34171"/>
        <dbReference type="ChEBI" id="CHEBI:15361"/>
        <dbReference type="ChEBI" id="CHEBI:15377"/>
        <dbReference type="ChEBI" id="CHEBI:15378"/>
        <dbReference type="ChEBI" id="CHEBI:67139"/>
        <dbReference type="ChEBI" id="CHEBI:537519"/>
        <dbReference type="EC" id="4.3.3.7"/>
    </reaction>
</comment>
<comment type="pathway">
    <text evidence="1">Amino-acid biosynthesis; L-lysine biosynthesis via DAP pathway; (S)-tetrahydrodipicolinate from L-aspartate: step 3/4.</text>
</comment>
<comment type="subunit">
    <text evidence="1">Homotetramer; dimer of dimers.</text>
</comment>
<comment type="subcellular location">
    <subcellularLocation>
        <location evidence="1">Cytoplasm</location>
    </subcellularLocation>
</comment>
<comment type="similarity">
    <text evidence="1">Belongs to the DapA family.</text>
</comment>
<comment type="caution">
    <text evidence="2">Was originally thought to be a dihydrodipicolinate synthase (DHDPS), catalyzing the condensation of (S)-aspartate-beta-semialdehyde [(S)-ASA] and pyruvate to dihydrodipicolinate (DHDP). However, it was shown in E.coli that the product of the enzymatic reaction is not dihydrodipicolinate but in fact (4S)-4-hydroxy-2,3,4,5-tetrahydro-(2S)-dipicolinic acid (HTPA), and that the consecutive dehydration reaction leading to DHDP is not spontaneous but catalyzed by DapB.</text>
</comment>
<proteinExistence type="inferred from homology"/>
<accession>Q2N9J7</accession>